<protein>
    <recommendedName>
        <fullName evidence="2">Large ribosomal subunit protein bL20c</fullName>
    </recommendedName>
    <alternativeName>
        <fullName evidence="3">50S ribosomal protein L20, chloroplastic</fullName>
    </alternativeName>
</protein>
<geneLocation type="chloroplast"/>
<accession>Q9BBR0</accession>
<comment type="function">
    <text evidence="2">Binds directly to 23S ribosomal RNA and is necessary for the in vitro assembly process of the 50S ribosomal subunit. It is not involved in the protein synthesizing functions of that subunit.</text>
</comment>
<comment type="subcellular location">
    <subcellularLocation>
        <location>Plastid</location>
        <location>Chloroplast</location>
    </subcellularLocation>
</comment>
<comment type="similarity">
    <text evidence="2">Belongs to the bacterial ribosomal protein bL20 family.</text>
</comment>
<evidence type="ECO:0000250" key="1"/>
<evidence type="ECO:0000255" key="2">
    <source>
        <dbReference type="HAMAP-Rule" id="MF_00382"/>
    </source>
</evidence>
<evidence type="ECO:0000305" key="3"/>
<keyword id="KW-0150">Chloroplast</keyword>
<keyword id="KW-0934">Plastid</keyword>
<keyword id="KW-0687">Ribonucleoprotein</keyword>
<keyword id="KW-0689">Ribosomal protein</keyword>
<keyword id="KW-0694">RNA-binding</keyword>
<keyword id="KW-0699">rRNA-binding</keyword>
<proteinExistence type="inferred from homology"/>
<feature type="initiator methionine" description="Removed" evidence="1">
    <location>
        <position position="1"/>
    </location>
</feature>
<feature type="chain" id="PRO_0000177292" description="Large ribosomal subunit protein bL20c">
    <location>
        <begin position="2"/>
        <end position="121"/>
    </location>
</feature>
<dbReference type="EMBL" id="AP002983">
    <property type="protein sequence ID" value="BAB33219.1"/>
    <property type="molecule type" value="Genomic_DNA"/>
</dbReference>
<dbReference type="RefSeq" id="NP_084821.1">
    <property type="nucleotide sequence ID" value="NC_002694.1"/>
</dbReference>
<dbReference type="SMR" id="Q9BBR0"/>
<dbReference type="GeneID" id="802921"/>
<dbReference type="GO" id="GO:0009507">
    <property type="term" value="C:chloroplast"/>
    <property type="evidence" value="ECO:0007669"/>
    <property type="project" value="UniProtKB-SubCell"/>
</dbReference>
<dbReference type="GO" id="GO:1990904">
    <property type="term" value="C:ribonucleoprotein complex"/>
    <property type="evidence" value="ECO:0007669"/>
    <property type="project" value="UniProtKB-KW"/>
</dbReference>
<dbReference type="GO" id="GO:0005840">
    <property type="term" value="C:ribosome"/>
    <property type="evidence" value="ECO:0007669"/>
    <property type="project" value="UniProtKB-KW"/>
</dbReference>
<dbReference type="GO" id="GO:0019843">
    <property type="term" value="F:rRNA binding"/>
    <property type="evidence" value="ECO:0007669"/>
    <property type="project" value="UniProtKB-UniRule"/>
</dbReference>
<dbReference type="GO" id="GO:0003735">
    <property type="term" value="F:structural constituent of ribosome"/>
    <property type="evidence" value="ECO:0007669"/>
    <property type="project" value="InterPro"/>
</dbReference>
<dbReference type="GO" id="GO:0000027">
    <property type="term" value="P:ribosomal large subunit assembly"/>
    <property type="evidence" value="ECO:0007669"/>
    <property type="project" value="UniProtKB-UniRule"/>
</dbReference>
<dbReference type="GO" id="GO:0006412">
    <property type="term" value="P:translation"/>
    <property type="evidence" value="ECO:0007669"/>
    <property type="project" value="InterPro"/>
</dbReference>
<dbReference type="CDD" id="cd07026">
    <property type="entry name" value="Ribosomal_L20"/>
    <property type="match status" value="1"/>
</dbReference>
<dbReference type="FunFam" id="1.10.1900.20:FF:000001">
    <property type="entry name" value="50S ribosomal protein L20"/>
    <property type="match status" value="1"/>
</dbReference>
<dbReference type="Gene3D" id="6.10.160.10">
    <property type="match status" value="1"/>
</dbReference>
<dbReference type="Gene3D" id="1.10.1900.20">
    <property type="entry name" value="Ribosomal protein L20"/>
    <property type="match status" value="1"/>
</dbReference>
<dbReference type="HAMAP" id="MF_00382">
    <property type="entry name" value="Ribosomal_bL20"/>
    <property type="match status" value="1"/>
</dbReference>
<dbReference type="InterPro" id="IPR005813">
    <property type="entry name" value="Ribosomal_bL20"/>
</dbReference>
<dbReference type="InterPro" id="IPR049946">
    <property type="entry name" value="RIBOSOMAL_L20_CS"/>
</dbReference>
<dbReference type="InterPro" id="IPR035566">
    <property type="entry name" value="Ribosomal_protein_bL20_C"/>
</dbReference>
<dbReference type="NCBIfam" id="TIGR01032">
    <property type="entry name" value="rplT_bact"/>
    <property type="match status" value="1"/>
</dbReference>
<dbReference type="PANTHER" id="PTHR10986">
    <property type="entry name" value="39S RIBOSOMAL PROTEIN L20"/>
    <property type="match status" value="1"/>
</dbReference>
<dbReference type="Pfam" id="PF00453">
    <property type="entry name" value="Ribosomal_L20"/>
    <property type="match status" value="1"/>
</dbReference>
<dbReference type="PRINTS" id="PR00062">
    <property type="entry name" value="RIBOSOMALL20"/>
</dbReference>
<dbReference type="SUPFAM" id="SSF74731">
    <property type="entry name" value="Ribosomal protein L20"/>
    <property type="match status" value="1"/>
</dbReference>
<dbReference type="PROSITE" id="PS00937">
    <property type="entry name" value="RIBOSOMAL_L20"/>
    <property type="match status" value="1"/>
</dbReference>
<gene>
    <name evidence="2" type="primary">rpl20</name>
</gene>
<reference key="1">
    <citation type="journal article" date="2000" name="DNA Res.">
        <title>Complete structure of the chloroplast genome of a legume, Lotus japonicus.</title>
        <authorList>
            <person name="Kato T."/>
            <person name="Kaneko T."/>
            <person name="Sato S."/>
            <person name="Nakamura Y."/>
            <person name="Tabata S."/>
        </authorList>
    </citation>
    <scope>NUCLEOTIDE SEQUENCE [LARGE SCALE GENOMIC DNA]</scope>
    <source>
        <strain>cv. Miyakojima MG-20</strain>
    </source>
</reference>
<sequence length="121" mass="14402">MTRIKRGYIARKRRTKIRLFTSSFRGAHSRLTRTISQQKIKALVSAHRDRNRKKREFRGLWISRINAGIGDNDKKKNIYYSYSNFMYNLYKKQLLLNRKIVAQIAIFKGNCLFMIANEIIT</sequence>
<organism>
    <name type="scientific">Lotus japonicus</name>
    <name type="common">Lotus corniculatus var. japonicus</name>
    <dbReference type="NCBI Taxonomy" id="34305"/>
    <lineage>
        <taxon>Eukaryota</taxon>
        <taxon>Viridiplantae</taxon>
        <taxon>Streptophyta</taxon>
        <taxon>Embryophyta</taxon>
        <taxon>Tracheophyta</taxon>
        <taxon>Spermatophyta</taxon>
        <taxon>Magnoliopsida</taxon>
        <taxon>eudicotyledons</taxon>
        <taxon>Gunneridae</taxon>
        <taxon>Pentapetalae</taxon>
        <taxon>rosids</taxon>
        <taxon>fabids</taxon>
        <taxon>Fabales</taxon>
        <taxon>Fabaceae</taxon>
        <taxon>Papilionoideae</taxon>
        <taxon>50 kb inversion clade</taxon>
        <taxon>NPAAA clade</taxon>
        <taxon>Hologalegina</taxon>
        <taxon>robinioid clade</taxon>
        <taxon>Loteae</taxon>
        <taxon>Lotus</taxon>
    </lineage>
</organism>
<name>RK20_LOTJA</name>